<accession>P08639</accession>
<comment type="function">
    <text evidence="1">LuxC is the fatty acid reductase enzyme responsible for synthesis of the aldehyde substrate for the luminescent reaction catalyzed by luciferase.</text>
</comment>
<comment type="catalytic activity">
    <reaction evidence="1">
        <text>a long-chain fatty aldehyde + NADP(+) + CoA = a long-chain fatty acyl-CoA + NADPH + H(+)</text>
        <dbReference type="Rhea" id="RHEA:15437"/>
        <dbReference type="ChEBI" id="CHEBI:15378"/>
        <dbReference type="ChEBI" id="CHEBI:17176"/>
        <dbReference type="ChEBI" id="CHEBI:57287"/>
        <dbReference type="ChEBI" id="CHEBI:57783"/>
        <dbReference type="ChEBI" id="CHEBI:58349"/>
        <dbReference type="ChEBI" id="CHEBI:83139"/>
        <dbReference type="EC" id="1.2.1.50"/>
    </reaction>
</comment>
<comment type="pathway">
    <text>Lipid metabolism; fatty acid reduction for biolumincescence.</text>
</comment>
<comment type="similarity">
    <text evidence="2">Belongs to the LuxC family.</text>
</comment>
<comment type="sequence caution" evidence="2">
    <conflict type="erroneous initiation">
        <sequence resource="EMBL-CDS" id="CAA30117"/>
    </conflict>
</comment>
<name>LUXC_VIBHA</name>
<gene>
    <name type="primary">luxC</name>
</gene>
<keyword id="KW-0455">Luminescence</keyword>
<keyword id="KW-0521">NADP</keyword>
<keyword id="KW-0560">Oxidoreductase</keyword>
<reference key="1">
    <citation type="journal article" date="1988" name="Nucleic Acids Res.">
        <title>Nucleotide sequence of the LuxC gene and the upstream DNA from the bioluminescent system of Vibrio harveyi.</title>
        <authorList>
            <person name="Miyamoto C.M."/>
            <person name="Graham A.F."/>
            <person name="Meighen E.A."/>
        </authorList>
    </citation>
    <scope>NUCLEOTIDE SEQUENCE [GENOMIC DNA]</scope>
</reference>
<protein>
    <recommendedName>
        <fullName evidence="2">Long-chain acyl-protein thioester reductase</fullName>
        <ecNumber evidence="1">1.2.1.50</ecNumber>
    </recommendedName>
    <alternativeName>
        <fullName>Acyl-CoA reductase</fullName>
    </alternativeName>
</protein>
<evidence type="ECO:0000250" key="1">
    <source>
        <dbReference type="UniProtKB" id="P19841"/>
    </source>
</evidence>
<evidence type="ECO:0000305" key="2"/>
<organism>
    <name type="scientific">Vibrio harveyi</name>
    <name type="common">Beneckea harveyi</name>
    <dbReference type="NCBI Taxonomy" id="669"/>
    <lineage>
        <taxon>Bacteria</taxon>
        <taxon>Pseudomonadati</taxon>
        <taxon>Pseudomonadota</taxon>
        <taxon>Gammaproteobacteria</taxon>
        <taxon>Vibrionales</taxon>
        <taxon>Vibrionaceae</taxon>
        <taxon>Vibrio</taxon>
    </lineage>
</organism>
<sequence length="477" mass="54840">MEKHLPLIVNGQIISTEENRFEISFEEKKVKIDSFNNLHLTQMVNHDYLNDLNINNIINFLYTTGQRWKSEEYSRRRAYIRSLITYLGYSPQMAKLEANWIAMILCSKSALYDIIDTELGSTHIQDEWLPQGECYVRAFPKGRTMHLLAGNVPLSGVTSILRGILTRNQCIVRMSASDPFTAHALAMSFIDVDPNHPISRSISVLYWPHASDTTLAEELLSHMDAVVAWGGRDAIDWAVKHSPSHIDVLKFGPKKSFTVLDHPADLEEAASGVAHDICFYDQNACFSTQNIYFSGDKYEEFKLKLVEKLNLYQEVLPKSKQSFDDEALFSMTRLECQFSGLKVISEPENNWMIIESEPGVEYNHPLSRCVYVHKINKVDDVVQYIEKHQTQTISFYPWESSKKYRDAFAAKGVERIVESGMNNIFRAGGAHDAMRPLQRLVRFVSHERPYNFTTKDVSVEIEQTRFLEEDKFLVFVP</sequence>
<proteinExistence type="inferred from homology"/>
<feature type="chain" id="PRO_0000220202" description="Long-chain acyl-protein thioester reductase">
    <location>
        <begin position="1"/>
        <end position="477"/>
    </location>
</feature>
<dbReference type="EC" id="1.2.1.50" evidence="1"/>
<dbReference type="EMBL" id="X07084">
    <property type="protein sequence ID" value="CAA30116.1"/>
    <property type="molecule type" value="Genomic_DNA"/>
</dbReference>
<dbReference type="EMBL" id="X07084">
    <property type="protein sequence ID" value="CAA30117.1"/>
    <property type="status" value="ALT_INIT"/>
    <property type="molecule type" value="Genomic_DNA"/>
</dbReference>
<dbReference type="PIR" id="A28534">
    <property type="entry name" value="A28534"/>
</dbReference>
<dbReference type="RefSeq" id="WP_038897471.1">
    <property type="nucleotide sequence ID" value="NZ_UAVF01000022.1"/>
</dbReference>
<dbReference type="SMR" id="P08639"/>
<dbReference type="PATRIC" id="fig|669.65.peg.3629"/>
<dbReference type="UniPathway" id="UPA00569"/>
<dbReference type="GO" id="GO:0003995">
    <property type="term" value="F:acyl-CoA dehydrogenase activity"/>
    <property type="evidence" value="ECO:0007669"/>
    <property type="project" value="InterPro"/>
</dbReference>
<dbReference type="GO" id="GO:0050062">
    <property type="term" value="F:long-chain-fatty-acyl-CoA reductase activity"/>
    <property type="evidence" value="ECO:0007669"/>
    <property type="project" value="UniProtKB-EC"/>
</dbReference>
<dbReference type="GO" id="GO:0008218">
    <property type="term" value="P:bioluminescence"/>
    <property type="evidence" value="ECO:0007669"/>
    <property type="project" value="UniProtKB-KW"/>
</dbReference>
<dbReference type="CDD" id="cd07080">
    <property type="entry name" value="ALDH_Acyl-CoA-Red_LuxC"/>
    <property type="match status" value="1"/>
</dbReference>
<dbReference type="Gene3D" id="3.40.605.10">
    <property type="entry name" value="Aldehyde Dehydrogenase, Chain A, domain 1"/>
    <property type="match status" value="1"/>
</dbReference>
<dbReference type="Gene3D" id="3.40.309.10">
    <property type="entry name" value="Aldehyde Dehydrogenase, Chain A, domain 2"/>
    <property type="match status" value="1"/>
</dbReference>
<dbReference type="InterPro" id="IPR016161">
    <property type="entry name" value="Ald_DH/histidinol_DH"/>
</dbReference>
<dbReference type="InterPro" id="IPR016163">
    <property type="entry name" value="Ald_DH_C"/>
</dbReference>
<dbReference type="InterPro" id="IPR016162">
    <property type="entry name" value="Ald_DH_N"/>
</dbReference>
<dbReference type="InterPro" id="IPR008670">
    <property type="entry name" value="CoA_reduct_LuxC"/>
</dbReference>
<dbReference type="Pfam" id="PF05893">
    <property type="entry name" value="LuxC"/>
    <property type="match status" value="1"/>
</dbReference>
<dbReference type="PIRSF" id="PIRSF009414">
    <property type="entry name" value="LuxC"/>
    <property type="match status" value="1"/>
</dbReference>
<dbReference type="SUPFAM" id="SSF53720">
    <property type="entry name" value="ALDH-like"/>
    <property type="match status" value="1"/>
</dbReference>